<evidence type="ECO:0000255" key="1">
    <source>
        <dbReference type="HAMAP-Rule" id="MF_00095"/>
    </source>
</evidence>
<proteinExistence type="inferred from homology"/>
<protein>
    <recommendedName>
        <fullName evidence="1">Sugar fermentation stimulation protein homolog</fullName>
    </recommendedName>
</protein>
<sequence>MKITKNILKAEFIKRPNRFQAYVKINEKIEMVHVPNTGRCKEILIPGSMVILREENNENRKTRYDLIAGYKGDMLINIDSQIPNKVVHEALMNLKIDILKEYTNIKREKTFGKSRFDFKLEKENGEIYYLEVKGVTLENDGLTMFPDAPTERGTKHILELIDVKNKGMGAGVLFLIQLNGVKKFTPHHKMDKNFGEALRLAKEKGVDILAYDCLVEESSISLNNPISIEI</sequence>
<accession>A5HXT1</accession>
<accession>A7FZV7</accession>
<keyword id="KW-1185">Reference proteome</keyword>
<feature type="chain" id="PRO_1000007974" description="Sugar fermentation stimulation protein homolog">
    <location>
        <begin position="1"/>
        <end position="230"/>
    </location>
</feature>
<dbReference type="EMBL" id="CP000727">
    <property type="protein sequence ID" value="ABS38874.1"/>
    <property type="molecule type" value="Genomic_DNA"/>
</dbReference>
<dbReference type="EMBL" id="AM412317">
    <property type="protein sequence ID" value="CAL81589.1"/>
    <property type="molecule type" value="Genomic_DNA"/>
</dbReference>
<dbReference type="RefSeq" id="WP_011947913.1">
    <property type="nucleotide sequence ID" value="NC_009698.1"/>
</dbReference>
<dbReference type="RefSeq" id="YP_001252584.1">
    <property type="nucleotide sequence ID" value="NC_009495.1"/>
</dbReference>
<dbReference type="RefSeq" id="YP_001385995.1">
    <property type="nucleotide sequence ID" value="NC_009698.1"/>
</dbReference>
<dbReference type="SMR" id="A5HXT1"/>
<dbReference type="GeneID" id="5184291"/>
<dbReference type="KEGG" id="cbh:CLC_0056"/>
<dbReference type="KEGG" id="cbo:CBO0036"/>
<dbReference type="PATRIC" id="fig|413999.7.peg.34"/>
<dbReference type="HOGENOM" id="CLU_052299_1_0_9"/>
<dbReference type="PRO" id="PR:A5HXT1"/>
<dbReference type="Proteomes" id="UP000001986">
    <property type="component" value="Chromosome"/>
</dbReference>
<dbReference type="GO" id="GO:0003677">
    <property type="term" value="F:DNA binding"/>
    <property type="evidence" value="ECO:0000318"/>
    <property type="project" value="GO_Central"/>
</dbReference>
<dbReference type="CDD" id="cd22359">
    <property type="entry name" value="SfsA-like_bacterial"/>
    <property type="match status" value="1"/>
</dbReference>
<dbReference type="FunFam" id="2.40.50.580:FF:000002">
    <property type="entry name" value="Sugar fermentation stimulation protein homolog"/>
    <property type="match status" value="1"/>
</dbReference>
<dbReference type="Gene3D" id="2.40.50.580">
    <property type="match status" value="1"/>
</dbReference>
<dbReference type="Gene3D" id="3.40.1350.60">
    <property type="match status" value="1"/>
</dbReference>
<dbReference type="HAMAP" id="MF_00095">
    <property type="entry name" value="SfsA"/>
    <property type="match status" value="1"/>
</dbReference>
<dbReference type="InterPro" id="IPR005224">
    <property type="entry name" value="SfsA"/>
</dbReference>
<dbReference type="InterPro" id="IPR040452">
    <property type="entry name" value="SfsA_C"/>
</dbReference>
<dbReference type="InterPro" id="IPR041465">
    <property type="entry name" value="SfsA_N"/>
</dbReference>
<dbReference type="NCBIfam" id="TIGR00230">
    <property type="entry name" value="sfsA"/>
    <property type="match status" value="1"/>
</dbReference>
<dbReference type="PANTHER" id="PTHR30545">
    <property type="entry name" value="SUGAR FERMENTATION STIMULATION PROTEIN A"/>
    <property type="match status" value="1"/>
</dbReference>
<dbReference type="PANTHER" id="PTHR30545:SF2">
    <property type="entry name" value="SUGAR FERMENTATION STIMULATION PROTEIN A"/>
    <property type="match status" value="1"/>
</dbReference>
<dbReference type="Pfam" id="PF03749">
    <property type="entry name" value="SfsA"/>
    <property type="match status" value="1"/>
</dbReference>
<dbReference type="Pfam" id="PF17746">
    <property type="entry name" value="SfsA_N"/>
    <property type="match status" value="1"/>
</dbReference>
<organism>
    <name type="scientific">Clostridium botulinum (strain Hall / ATCC 3502 / NCTC 13319 / Type A)</name>
    <dbReference type="NCBI Taxonomy" id="441771"/>
    <lineage>
        <taxon>Bacteria</taxon>
        <taxon>Bacillati</taxon>
        <taxon>Bacillota</taxon>
        <taxon>Clostridia</taxon>
        <taxon>Eubacteriales</taxon>
        <taxon>Clostridiaceae</taxon>
        <taxon>Clostridium</taxon>
    </lineage>
</organism>
<comment type="similarity">
    <text evidence="1">Belongs to the SfsA family.</text>
</comment>
<reference key="1">
    <citation type="journal article" date="2007" name="Genome Res.">
        <title>Genome sequence of a proteolytic (Group I) Clostridium botulinum strain Hall A and comparative analysis of the clostridial genomes.</title>
        <authorList>
            <person name="Sebaihia M."/>
            <person name="Peck M.W."/>
            <person name="Minton N.P."/>
            <person name="Thomson N.R."/>
            <person name="Holden M.T.G."/>
            <person name="Mitchell W.J."/>
            <person name="Carter A.T."/>
            <person name="Bentley S.D."/>
            <person name="Mason D.R."/>
            <person name="Crossman L."/>
            <person name="Paul C.J."/>
            <person name="Ivens A."/>
            <person name="Wells-Bennik M.H.J."/>
            <person name="Davis I.J."/>
            <person name="Cerdeno-Tarraga A.M."/>
            <person name="Churcher C."/>
            <person name="Quail M.A."/>
            <person name="Chillingworth T."/>
            <person name="Feltwell T."/>
            <person name="Fraser A."/>
            <person name="Goodhead I."/>
            <person name="Hance Z."/>
            <person name="Jagels K."/>
            <person name="Larke N."/>
            <person name="Maddison M."/>
            <person name="Moule S."/>
            <person name="Mungall K."/>
            <person name="Norbertczak H."/>
            <person name="Rabbinowitsch E."/>
            <person name="Sanders M."/>
            <person name="Simmonds M."/>
            <person name="White B."/>
            <person name="Whithead S."/>
            <person name="Parkhill J."/>
        </authorList>
    </citation>
    <scope>NUCLEOTIDE SEQUENCE [LARGE SCALE GENOMIC DNA]</scope>
    <source>
        <strain>Hall / ATCC 3502 / NCTC 13319 / Type A</strain>
    </source>
</reference>
<reference key="2">
    <citation type="journal article" date="2007" name="PLoS ONE">
        <title>Analysis of the neurotoxin complex genes in Clostridium botulinum A1-A4 and B1 strains: BoNT/A3, /Ba4 and /B1 clusters are located within plasmids.</title>
        <authorList>
            <person name="Smith T.J."/>
            <person name="Hill K.K."/>
            <person name="Foley B.T."/>
            <person name="Detter J.C."/>
            <person name="Munk A.C."/>
            <person name="Bruce D.C."/>
            <person name="Doggett N.A."/>
            <person name="Smith L.A."/>
            <person name="Marks J.D."/>
            <person name="Xie G."/>
            <person name="Brettin T.S."/>
        </authorList>
    </citation>
    <scope>NUCLEOTIDE SEQUENCE [LARGE SCALE GENOMIC DNA]</scope>
    <source>
        <strain>Hall / ATCC 3502 / NCTC 13319 / Type A</strain>
    </source>
</reference>
<name>SFSA_CLOBH</name>
<gene>
    <name evidence="1" type="primary">sfsA</name>
    <name type="ordered locus">CBO0036</name>
    <name type="ordered locus">CLC_0056</name>
</gene>